<reference key="1">
    <citation type="journal article" date="2006" name="Mol. Biol. Evol.">
        <title>The chloroplast genome of Phalaenopsis aphrodite (Orchidaceae): comparative analysis of evolutionary rate with that of grasses and its phylogenetic implications.</title>
        <authorList>
            <person name="Chang C.-C."/>
            <person name="Lin H.-C."/>
            <person name="Lin I.-P."/>
            <person name="Chow T.-Y."/>
            <person name="Chen H.-H."/>
            <person name="Chen W.-H."/>
            <person name="Cheng C.-H."/>
            <person name="Lin C.-Y."/>
            <person name="Liu S.-M."/>
            <person name="Chang C.-C."/>
            <person name="Chaw S.-M."/>
        </authorList>
    </citation>
    <scope>NUCLEOTIDE SEQUENCE [LARGE SCALE GENOMIC DNA]</scope>
    <source>
        <strain>cv. Taisugar TS-97</strain>
    </source>
</reference>
<evidence type="ECO:0000255" key="1">
    <source>
        <dbReference type="HAMAP-Rule" id="MF_00444"/>
    </source>
</evidence>
<protein>
    <recommendedName>
        <fullName evidence="1">ATP-dependent Clp protease proteolytic subunit</fullName>
        <ecNumber evidence="1">3.4.21.92</ecNumber>
    </recommendedName>
    <alternativeName>
        <fullName evidence="1">Endopeptidase Clp</fullName>
    </alternativeName>
</protein>
<accession>Q3BAL3</accession>
<organism>
    <name type="scientific">Phalaenopsis aphrodite subsp. formosana</name>
    <name type="common">Moth orchid</name>
    <dbReference type="NCBI Taxonomy" id="308872"/>
    <lineage>
        <taxon>Eukaryota</taxon>
        <taxon>Viridiplantae</taxon>
        <taxon>Streptophyta</taxon>
        <taxon>Embryophyta</taxon>
        <taxon>Tracheophyta</taxon>
        <taxon>Spermatophyta</taxon>
        <taxon>Magnoliopsida</taxon>
        <taxon>Liliopsida</taxon>
        <taxon>Asparagales</taxon>
        <taxon>Orchidaceae</taxon>
        <taxon>Epidendroideae</taxon>
        <taxon>Vandeae</taxon>
        <taxon>Aeridinae</taxon>
        <taxon>Phalaenopsis</taxon>
    </lineage>
</organism>
<dbReference type="EC" id="3.4.21.92" evidence="1"/>
<dbReference type="EMBL" id="AY916449">
    <property type="protein sequence ID" value="AAW82524.1"/>
    <property type="molecule type" value="Genomic_DNA"/>
</dbReference>
<dbReference type="RefSeq" id="YP_358605.1">
    <property type="nucleotide sequence ID" value="NC_007499.1"/>
</dbReference>
<dbReference type="SMR" id="Q3BAL3"/>
<dbReference type="MEROPS" id="S14.002"/>
<dbReference type="GeneID" id="3741705"/>
<dbReference type="GO" id="GO:0009570">
    <property type="term" value="C:chloroplast stroma"/>
    <property type="evidence" value="ECO:0007669"/>
    <property type="project" value="UniProtKB-SubCell"/>
</dbReference>
<dbReference type="GO" id="GO:0009368">
    <property type="term" value="C:endopeptidase Clp complex"/>
    <property type="evidence" value="ECO:0007669"/>
    <property type="project" value="TreeGrafter"/>
</dbReference>
<dbReference type="GO" id="GO:0004176">
    <property type="term" value="F:ATP-dependent peptidase activity"/>
    <property type="evidence" value="ECO:0007669"/>
    <property type="project" value="InterPro"/>
</dbReference>
<dbReference type="GO" id="GO:0051117">
    <property type="term" value="F:ATPase binding"/>
    <property type="evidence" value="ECO:0007669"/>
    <property type="project" value="TreeGrafter"/>
</dbReference>
<dbReference type="GO" id="GO:0004252">
    <property type="term" value="F:serine-type endopeptidase activity"/>
    <property type="evidence" value="ECO:0007669"/>
    <property type="project" value="UniProtKB-UniRule"/>
</dbReference>
<dbReference type="GO" id="GO:0006515">
    <property type="term" value="P:protein quality control for misfolded or incompletely synthesized proteins"/>
    <property type="evidence" value="ECO:0007669"/>
    <property type="project" value="TreeGrafter"/>
</dbReference>
<dbReference type="CDD" id="cd07017">
    <property type="entry name" value="S14_ClpP_2"/>
    <property type="match status" value="1"/>
</dbReference>
<dbReference type="FunFam" id="3.90.226.10:FF:000006">
    <property type="entry name" value="ATP-dependent Clp protease proteolytic subunit"/>
    <property type="match status" value="1"/>
</dbReference>
<dbReference type="Gene3D" id="3.90.226.10">
    <property type="entry name" value="2-enoyl-CoA Hydratase, Chain A, domain 1"/>
    <property type="match status" value="1"/>
</dbReference>
<dbReference type="HAMAP" id="MF_00444">
    <property type="entry name" value="ClpP"/>
    <property type="match status" value="1"/>
</dbReference>
<dbReference type="InterPro" id="IPR001907">
    <property type="entry name" value="ClpP"/>
</dbReference>
<dbReference type="InterPro" id="IPR029045">
    <property type="entry name" value="ClpP/crotonase-like_dom_sf"/>
</dbReference>
<dbReference type="InterPro" id="IPR023562">
    <property type="entry name" value="ClpP/TepA"/>
</dbReference>
<dbReference type="InterPro" id="IPR033135">
    <property type="entry name" value="ClpP_His_AS"/>
</dbReference>
<dbReference type="InterPro" id="IPR018215">
    <property type="entry name" value="ClpP_Ser_AS"/>
</dbReference>
<dbReference type="PANTHER" id="PTHR10381">
    <property type="entry name" value="ATP-DEPENDENT CLP PROTEASE PROTEOLYTIC SUBUNIT"/>
    <property type="match status" value="1"/>
</dbReference>
<dbReference type="PANTHER" id="PTHR10381:SF15">
    <property type="entry name" value="CHLOROPLASTIC ATP-DEPENDENT CLP PROTEASE PROTEOLYTIC SUBUNIT 1"/>
    <property type="match status" value="1"/>
</dbReference>
<dbReference type="Pfam" id="PF00574">
    <property type="entry name" value="CLP_protease"/>
    <property type="match status" value="1"/>
</dbReference>
<dbReference type="PRINTS" id="PR00127">
    <property type="entry name" value="CLPPROTEASEP"/>
</dbReference>
<dbReference type="SUPFAM" id="SSF52096">
    <property type="entry name" value="ClpP/crotonase"/>
    <property type="match status" value="1"/>
</dbReference>
<dbReference type="PROSITE" id="PS00382">
    <property type="entry name" value="CLP_PROTEASE_HIS"/>
    <property type="match status" value="1"/>
</dbReference>
<dbReference type="PROSITE" id="PS00381">
    <property type="entry name" value="CLP_PROTEASE_SER"/>
    <property type="match status" value="1"/>
</dbReference>
<geneLocation type="chloroplast"/>
<proteinExistence type="inferred from homology"/>
<gene>
    <name evidence="1" type="primary">clpP</name>
</gene>
<keyword id="KW-0150">Chloroplast</keyword>
<keyword id="KW-0378">Hydrolase</keyword>
<keyword id="KW-0934">Plastid</keyword>
<keyword id="KW-0645">Protease</keyword>
<keyword id="KW-0720">Serine protease</keyword>
<name>CLPP_PHAAO</name>
<feature type="chain" id="PRO_0000275297" description="ATP-dependent Clp protease proteolytic subunit">
    <location>
        <begin position="1"/>
        <end position="204"/>
    </location>
</feature>
<feature type="active site" description="Nucleophile" evidence="1">
    <location>
        <position position="101"/>
    </location>
</feature>
<feature type="active site" evidence="1">
    <location>
        <position position="126"/>
    </location>
</feature>
<sequence>MPIGVPKVPFRNPGEEDAVWVDVYNRLHRERLLFLGQEVDSEISNQIVGLMVYLSIEDDTRDLYLFINSPGGWVIPGIAIYDTMQFVLPDVHTICMGLAASMGSFILVGGEITKRLAFPHARVMIHQPASSFYEAQARDFILEAEELLKLRETLTKVYVQRTGNPLWVISEDMERDVFMSATEAQAHGIVDLVAIENENTGNSI</sequence>
<comment type="function">
    <text evidence="1">Cleaves peptides in various proteins in a process that requires ATP hydrolysis. Has a chymotrypsin-like activity. Plays a major role in the degradation of misfolded proteins.</text>
</comment>
<comment type="catalytic activity">
    <reaction evidence="1">
        <text>Hydrolysis of proteins to small peptides in the presence of ATP and magnesium. alpha-casein is the usual test substrate. In the absence of ATP, only oligopeptides shorter than five residues are hydrolyzed (such as succinyl-Leu-Tyr-|-NHMec, and Leu-Tyr-Leu-|-Tyr-Trp, in which cleavage of the -Tyr-|-Leu- and -Tyr-|-Trp bonds also occurs).</text>
        <dbReference type="EC" id="3.4.21.92"/>
    </reaction>
</comment>
<comment type="subunit">
    <text>Component of the chloroplastic Clp protease core complex.</text>
</comment>
<comment type="subcellular location">
    <subcellularLocation>
        <location evidence="1">Plastid</location>
        <location evidence="1">Chloroplast stroma</location>
    </subcellularLocation>
</comment>
<comment type="similarity">
    <text evidence="1">Belongs to the peptidase S14 family.</text>
</comment>